<keyword id="KW-0997">Cell inner membrane</keyword>
<keyword id="KW-1003">Cell membrane</keyword>
<keyword id="KW-0963">Cytoplasm</keyword>
<keyword id="KW-0342">GTP-binding</keyword>
<keyword id="KW-0472">Membrane</keyword>
<keyword id="KW-0547">Nucleotide-binding</keyword>
<keyword id="KW-1185">Reference proteome</keyword>
<keyword id="KW-0690">Ribosome biogenesis</keyword>
<keyword id="KW-0694">RNA-binding</keyword>
<keyword id="KW-0699">rRNA-binding</keyword>
<sequence>MKSGFVSIIGRPSTGKSTLLNSICEHQISIISSIPQTTRNKIKGIFTDKRGQIIFIDTPGFHLSKKQFNIALMHNVHSAIKETELILYVIDIQDKPGIEENEILTIISKSKINFLVVINKIDIQKTKEREIMIFLEEKGIKKDNIIKISAEQKINIEEIKDKIYENLQEGPLYYPEEYYTDQEMNLRTSEIIRGVTIKKLKEELPYSLYIEIEILEDRKNKLFIKANIIVAVESQKGIIVGKGGKGIKTIGEEARKIISEIFEKKCDLFLQVKLRKNWNKNPKLIKNLIN</sequence>
<dbReference type="EMBL" id="CP000049">
    <property type="protein sequence ID" value="AAX17977.1"/>
    <property type="molecule type" value="Genomic_DNA"/>
</dbReference>
<dbReference type="RefSeq" id="WP_011772595.1">
    <property type="nucleotide sequence ID" value="NC_008710.1"/>
</dbReference>
<dbReference type="SMR" id="A1R085"/>
<dbReference type="KEGG" id="btu:BT0660"/>
<dbReference type="eggNOG" id="COG1159">
    <property type="taxonomic scope" value="Bacteria"/>
</dbReference>
<dbReference type="HOGENOM" id="CLU_038009_1_0_12"/>
<dbReference type="Proteomes" id="UP000001205">
    <property type="component" value="Chromosome"/>
</dbReference>
<dbReference type="GO" id="GO:0005829">
    <property type="term" value="C:cytosol"/>
    <property type="evidence" value="ECO:0007669"/>
    <property type="project" value="TreeGrafter"/>
</dbReference>
<dbReference type="GO" id="GO:0005886">
    <property type="term" value="C:plasma membrane"/>
    <property type="evidence" value="ECO:0007669"/>
    <property type="project" value="UniProtKB-SubCell"/>
</dbReference>
<dbReference type="GO" id="GO:0016887">
    <property type="term" value="F:ATP hydrolysis activity"/>
    <property type="evidence" value="ECO:0007669"/>
    <property type="project" value="InterPro"/>
</dbReference>
<dbReference type="GO" id="GO:0005525">
    <property type="term" value="F:GTP binding"/>
    <property type="evidence" value="ECO:0007669"/>
    <property type="project" value="UniProtKB-UniRule"/>
</dbReference>
<dbReference type="GO" id="GO:0003924">
    <property type="term" value="F:GTPase activity"/>
    <property type="evidence" value="ECO:0007669"/>
    <property type="project" value="UniProtKB-UniRule"/>
</dbReference>
<dbReference type="GO" id="GO:0043024">
    <property type="term" value="F:ribosomal small subunit binding"/>
    <property type="evidence" value="ECO:0007669"/>
    <property type="project" value="TreeGrafter"/>
</dbReference>
<dbReference type="GO" id="GO:0070181">
    <property type="term" value="F:small ribosomal subunit rRNA binding"/>
    <property type="evidence" value="ECO:0007669"/>
    <property type="project" value="UniProtKB-UniRule"/>
</dbReference>
<dbReference type="GO" id="GO:0000028">
    <property type="term" value="P:ribosomal small subunit assembly"/>
    <property type="evidence" value="ECO:0007669"/>
    <property type="project" value="TreeGrafter"/>
</dbReference>
<dbReference type="CDD" id="cd04163">
    <property type="entry name" value="Era"/>
    <property type="match status" value="1"/>
</dbReference>
<dbReference type="Gene3D" id="3.30.300.20">
    <property type="match status" value="1"/>
</dbReference>
<dbReference type="Gene3D" id="3.40.50.300">
    <property type="entry name" value="P-loop containing nucleotide triphosphate hydrolases"/>
    <property type="match status" value="1"/>
</dbReference>
<dbReference type="HAMAP" id="MF_00367">
    <property type="entry name" value="GTPase_Era"/>
    <property type="match status" value="1"/>
</dbReference>
<dbReference type="InterPro" id="IPR003593">
    <property type="entry name" value="AAA+_ATPase"/>
</dbReference>
<dbReference type="InterPro" id="IPR030388">
    <property type="entry name" value="G_ERA_dom"/>
</dbReference>
<dbReference type="InterPro" id="IPR006073">
    <property type="entry name" value="GTP-bd"/>
</dbReference>
<dbReference type="InterPro" id="IPR005662">
    <property type="entry name" value="GTPase_Era-like"/>
</dbReference>
<dbReference type="InterPro" id="IPR015946">
    <property type="entry name" value="KH_dom-like_a/b"/>
</dbReference>
<dbReference type="InterPro" id="IPR004044">
    <property type="entry name" value="KH_dom_type_2"/>
</dbReference>
<dbReference type="InterPro" id="IPR009019">
    <property type="entry name" value="KH_sf_prok-type"/>
</dbReference>
<dbReference type="InterPro" id="IPR027417">
    <property type="entry name" value="P-loop_NTPase"/>
</dbReference>
<dbReference type="InterPro" id="IPR005225">
    <property type="entry name" value="Small_GTP-bd"/>
</dbReference>
<dbReference type="NCBIfam" id="TIGR00436">
    <property type="entry name" value="era"/>
    <property type="match status" value="1"/>
</dbReference>
<dbReference type="NCBIfam" id="NF000908">
    <property type="entry name" value="PRK00089.1"/>
    <property type="match status" value="1"/>
</dbReference>
<dbReference type="NCBIfam" id="TIGR00231">
    <property type="entry name" value="small_GTP"/>
    <property type="match status" value="1"/>
</dbReference>
<dbReference type="PANTHER" id="PTHR42698">
    <property type="entry name" value="GTPASE ERA"/>
    <property type="match status" value="1"/>
</dbReference>
<dbReference type="PANTHER" id="PTHR42698:SF1">
    <property type="entry name" value="GTPASE ERA, MITOCHONDRIAL"/>
    <property type="match status" value="1"/>
</dbReference>
<dbReference type="Pfam" id="PF07650">
    <property type="entry name" value="KH_2"/>
    <property type="match status" value="1"/>
</dbReference>
<dbReference type="Pfam" id="PF01926">
    <property type="entry name" value="MMR_HSR1"/>
    <property type="match status" value="1"/>
</dbReference>
<dbReference type="PRINTS" id="PR00326">
    <property type="entry name" value="GTP1OBG"/>
</dbReference>
<dbReference type="SMART" id="SM00382">
    <property type="entry name" value="AAA"/>
    <property type="match status" value="1"/>
</dbReference>
<dbReference type="SUPFAM" id="SSF52540">
    <property type="entry name" value="P-loop containing nucleoside triphosphate hydrolases"/>
    <property type="match status" value="1"/>
</dbReference>
<dbReference type="SUPFAM" id="SSF54814">
    <property type="entry name" value="Prokaryotic type KH domain (KH-domain type II)"/>
    <property type="match status" value="1"/>
</dbReference>
<dbReference type="PROSITE" id="PS51713">
    <property type="entry name" value="G_ERA"/>
    <property type="match status" value="1"/>
</dbReference>
<dbReference type="PROSITE" id="PS50823">
    <property type="entry name" value="KH_TYPE_2"/>
    <property type="match status" value="1"/>
</dbReference>
<protein>
    <recommendedName>
        <fullName evidence="1">GTPase Era</fullName>
    </recommendedName>
</protein>
<name>ERA_BORT9</name>
<evidence type="ECO:0000255" key="1">
    <source>
        <dbReference type="HAMAP-Rule" id="MF_00367"/>
    </source>
</evidence>
<evidence type="ECO:0000255" key="2">
    <source>
        <dbReference type="PROSITE-ProRule" id="PRU01050"/>
    </source>
</evidence>
<gene>
    <name evidence="1" type="primary">era</name>
    <name type="ordered locus">BT0660</name>
</gene>
<reference key="1">
    <citation type="submission" date="2004-12" db="EMBL/GenBank/DDBJ databases">
        <title>The genome sequence of Borrelia hermsii and Borrelia turicatae: comparative analysis of two agents of endemic N. America relapsing fever.</title>
        <authorList>
            <person name="Porcella S.F."/>
            <person name="Raffel S.J."/>
            <person name="Schrumpf M.E."/>
            <person name="Montgomery B."/>
            <person name="Smith T."/>
            <person name="Schwan T.G."/>
        </authorList>
    </citation>
    <scope>NUCLEOTIDE SEQUENCE [LARGE SCALE GENOMIC DNA]</scope>
    <source>
        <strain>91E135</strain>
    </source>
</reference>
<feature type="chain" id="PRO_1000133765" description="GTPase Era">
    <location>
        <begin position="1"/>
        <end position="290"/>
    </location>
</feature>
<feature type="domain" description="Era-type G" evidence="2">
    <location>
        <begin position="2"/>
        <end position="169"/>
    </location>
</feature>
<feature type="domain" description="KH type-2" evidence="1">
    <location>
        <begin position="200"/>
        <end position="276"/>
    </location>
</feature>
<feature type="region of interest" description="G1" evidence="2">
    <location>
        <begin position="10"/>
        <end position="17"/>
    </location>
</feature>
<feature type="region of interest" description="G2" evidence="2">
    <location>
        <begin position="36"/>
        <end position="40"/>
    </location>
</feature>
<feature type="region of interest" description="G3" evidence="2">
    <location>
        <begin position="57"/>
        <end position="60"/>
    </location>
</feature>
<feature type="region of interest" description="G4" evidence="2">
    <location>
        <begin position="119"/>
        <end position="122"/>
    </location>
</feature>
<feature type="region of interest" description="G5" evidence="2">
    <location>
        <begin position="148"/>
        <end position="150"/>
    </location>
</feature>
<feature type="binding site" evidence="1">
    <location>
        <begin position="10"/>
        <end position="17"/>
    </location>
    <ligand>
        <name>GTP</name>
        <dbReference type="ChEBI" id="CHEBI:37565"/>
    </ligand>
</feature>
<feature type="binding site" evidence="1">
    <location>
        <begin position="57"/>
        <end position="61"/>
    </location>
    <ligand>
        <name>GTP</name>
        <dbReference type="ChEBI" id="CHEBI:37565"/>
    </ligand>
</feature>
<feature type="binding site" evidence="1">
    <location>
        <begin position="119"/>
        <end position="122"/>
    </location>
    <ligand>
        <name>GTP</name>
        <dbReference type="ChEBI" id="CHEBI:37565"/>
    </ligand>
</feature>
<accession>A1R085</accession>
<comment type="function">
    <text evidence="1">An essential GTPase that binds both GDP and GTP, with rapid nucleotide exchange. Plays a role in 16S rRNA processing and 30S ribosomal subunit biogenesis and possibly also in cell cycle regulation and energy metabolism.</text>
</comment>
<comment type="subunit">
    <text evidence="1">Monomer.</text>
</comment>
<comment type="subcellular location">
    <subcellularLocation>
        <location>Cytoplasm</location>
    </subcellularLocation>
    <subcellularLocation>
        <location evidence="1">Cell inner membrane</location>
        <topology evidence="1">Peripheral membrane protein</topology>
    </subcellularLocation>
</comment>
<comment type="similarity">
    <text evidence="1 2">Belongs to the TRAFAC class TrmE-Era-EngA-EngB-Septin-like GTPase superfamily. Era GTPase family.</text>
</comment>
<organism>
    <name type="scientific">Borrelia turicatae (strain 91E135)</name>
    <dbReference type="NCBI Taxonomy" id="314724"/>
    <lineage>
        <taxon>Bacteria</taxon>
        <taxon>Pseudomonadati</taxon>
        <taxon>Spirochaetota</taxon>
        <taxon>Spirochaetia</taxon>
        <taxon>Spirochaetales</taxon>
        <taxon>Borreliaceae</taxon>
        <taxon>Borrelia</taxon>
    </lineage>
</organism>
<proteinExistence type="inferred from homology"/>